<accession>P86557</accession>
<comment type="subcellular location">
    <subcellularLocation>
        <location evidence="1 3">Secreted</location>
    </subcellularLocation>
</comment>
<comment type="tissue specificity">
    <text evidence="1">Expressed in the antennal lobe (at protein level).</text>
</comment>
<sequence length="9" mass="921">GPSGFLGMR</sequence>
<protein>
    <recommendedName>
        <fullName evidence="2">Tachykinin-related peptide 1</fullName>
        <shortName evidence="2">TKRP-1</shortName>
    </recommendedName>
</protein>
<dbReference type="GO" id="GO:0005576">
    <property type="term" value="C:extracellular region"/>
    <property type="evidence" value="ECO:0007005"/>
    <property type="project" value="UniProtKB"/>
</dbReference>
<dbReference type="GO" id="GO:0007218">
    <property type="term" value="P:neuropeptide signaling pathway"/>
    <property type="evidence" value="ECO:0007669"/>
    <property type="project" value="UniProtKB-KW"/>
</dbReference>
<name>TRP1_ACRHI</name>
<keyword id="KW-0027">Amidation</keyword>
<keyword id="KW-0903">Direct protein sequencing</keyword>
<keyword id="KW-0527">Neuropeptide</keyword>
<keyword id="KW-0964">Secreted</keyword>
<evidence type="ECO:0000269" key="1">
    <source>
    </source>
</evidence>
<evidence type="ECO:0000303" key="2">
    <source>
    </source>
</evidence>
<evidence type="ECO:0000305" key="3"/>
<reference evidence="3" key="1">
    <citation type="journal article" date="2009" name="Peptides">
        <title>Neuropeptides in Heteroptera: identification of allatotropin-related peptide and tachykinin-related peptides using MALDI-TOF mass spectrometry.</title>
        <authorList>
            <person name="Neupert S."/>
            <person name="Russell W.K."/>
            <person name="Russell D.H."/>
            <person name="Lopez J.D. Jr."/>
            <person name="Predel R."/>
            <person name="Nachman R.J."/>
        </authorList>
    </citation>
    <scope>PROTEIN SEQUENCE</scope>
    <scope>SUBCELLULAR LOCATION</scope>
    <scope>TISSUE SPECIFICITY</scope>
    <scope>AMIDATION AT ARG-9</scope>
    <source>
        <tissue evidence="1">Antennal lobe</tissue>
    </source>
</reference>
<proteinExistence type="evidence at protein level"/>
<feature type="peptide" id="PRO_0000395626" description="Tachykinin-related peptide 1" evidence="1">
    <location>
        <begin position="1"/>
        <end position="9"/>
    </location>
</feature>
<feature type="modified residue" description="Arginine amide" evidence="1">
    <location>
        <position position="9"/>
    </location>
</feature>
<organism>
    <name type="scientific">Acrosternum hilare</name>
    <name type="common">Green stink bug</name>
    <name type="synonym">Nezara hilaris</name>
    <dbReference type="NCBI Taxonomy" id="244443"/>
    <lineage>
        <taxon>Eukaryota</taxon>
        <taxon>Metazoa</taxon>
        <taxon>Ecdysozoa</taxon>
        <taxon>Arthropoda</taxon>
        <taxon>Hexapoda</taxon>
        <taxon>Insecta</taxon>
        <taxon>Pterygota</taxon>
        <taxon>Neoptera</taxon>
        <taxon>Paraneoptera</taxon>
        <taxon>Hemiptera</taxon>
        <taxon>Heteroptera</taxon>
        <taxon>Panheteroptera</taxon>
        <taxon>Pentatomomorpha</taxon>
        <taxon>Pentatomoidea</taxon>
        <taxon>Pentatomidae</taxon>
        <taxon>Pentatominae</taxon>
        <taxon>Acrosternum</taxon>
    </lineage>
</organism>